<keyword id="KW-0004">4Fe-4S</keyword>
<keyword id="KW-0963">Cytoplasm</keyword>
<keyword id="KW-0408">Iron</keyword>
<keyword id="KW-0411">Iron-sulfur</keyword>
<keyword id="KW-0479">Metal-binding</keyword>
<keyword id="KW-0949">S-adenosyl-L-methionine</keyword>
<keyword id="KW-0808">Transferase</keyword>
<feature type="chain" id="PRO_0000325243" description="Lipoyl synthase">
    <location>
        <begin position="1"/>
        <end position="328"/>
    </location>
</feature>
<feature type="domain" description="Radical SAM core" evidence="2">
    <location>
        <begin position="69"/>
        <end position="287"/>
    </location>
</feature>
<feature type="binding site" evidence="1">
    <location>
        <position position="57"/>
    </location>
    <ligand>
        <name>[4Fe-4S] cluster</name>
        <dbReference type="ChEBI" id="CHEBI:49883"/>
        <label>1</label>
    </ligand>
</feature>
<feature type="binding site" evidence="1">
    <location>
        <position position="62"/>
    </location>
    <ligand>
        <name>[4Fe-4S] cluster</name>
        <dbReference type="ChEBI" id="CHEBI:49883"/>
        <label>1</label>
    </ligand>
</feature>
<feature type="binding site" evidence="1">
    <location>
        <position position="68"/>
    </location>
    <ligand>
        <name>[4Fe-4S] cluster</name>
        <dbReference type="ChEBI" id="CHEBI:49883"/>
        <label>1</label>
    </ligand>
</feature>
<feature type="binding site" evidence="1">
    <location>
        <position position="83"/>
    </location>
    <ligand>
        <name>[4Fe-4S] cluster</name>
        <dbReference type="ChEBI" id="CHEBI:49883"/>
        <label>2</label>
        <note>4Fe-4S-S-AdoMet</note>
    </ligand>
</feature>
<feature type="binding site" evidence="1">
    <location>
        <position position="87"/>
    </location>
    <ligand>
        <name>[4Fe-4S] cluster</name>
        <dbReference type="ChEBI" id="CHEBI:49883"/>
        <label>2</label>
        <note>4Fe-4S-S-AdoMet</note>
    </ligand>
</feature>
<feature type="binding site" evidence="1">
    <location>
        <position position="90"/>
    </location>
    <ligand>
        <name>[4Fe-4S] cluster</name>
        <dbReference type="ChEBI" id="CHEBI:49883"/>
        <label>2</label>
        <note>4Fe-4S-S-AdoMet</note>
    </ligand>
</feature>
<feature type="binding site" evidence="1">
    <location>
        <position position="298"/>
    </location>
    <ligand>
        <name>[4Fe-4S] cluster</name>
        <dbReference type="ChEBI" id="CHEBI:49883"/>
        <label>1</label>
    </ligand>
</feature>
<name>LIPA_DEIGD</name>
<dbReference type="EC" id="2.8.1.8" evidence="1"/>
<dbReference type="EMBL" id="CP000359">
    <property type="protein sequence ID" value="ABF46037.1"/>
    <property type="molecule type" value="Genomic_DNA"/>
</dbReference>
<dbReference type="RefSeq" id="WP_011530868.1">
    <property type="nucleotide sequence ID" value="NC_008025.1"/>
</dbReference>
<dbReference type="SMR" id="Q1IXJ7"/>
<dbReference type="STRING" id="319795.Dgeo_1742"/>
<dbReference type="KEGG" id="dge:Dgeo_1742"/>
<dbReference type="eggNOG" id="COG0320">
    <property type="taxonomic scope" value="Bacteria"/>
</dbReference>
<dbReference type="HOGENOM" id="CLU_033144_2_0_0"/>
<dbReference type="UniPathway" id="UPA00538">
    <property type="reaction ID" value="UER00593"/>
</dbReference>
<dbReference type="Proteomes" id="UP000002431">
    <property type="component" value="Chromosome"/>
</dbReference>
<dbReference type="GO" id="GO:0005737">
    <property type="term" value="C:cytoplasm"/>
    <property type="evidence" value="ECO:0007669"/>
    <property type="project" value="UniProtKB-SubCell"/>
</dbReference>
<dbReference type="GO" id="GO:0051539">
    <property type="term" value="F:4 iron, 4 sulfur cluster binding"/>
    <property type="evidence" value="ECO:0007669"/>
    <property type="project" value="UniProtKB-UniRule"/>
</dbReference>
<dbReference type="GO" id="GO:0016992">
    <property type="term" value="F:lipoate synthase activity"/>
    <property type="evidence" value="ECO:0007669"/>
    <property type="project" value="UniProtKB-UniRule"/>
</dbReference>
<dbReference type="GO" id="GO:0046872">
    <property type="term" value="F:metal ion binding"/>
    <property type="evidence" value="ECO:0007669"/>
    <property type="project" value="UniProtKB-KW"/>
</dbReference>
<dbReference type="CDD" id="cd01335">
    <property type="entry name" value="Radical_SAM"/>
    <property type="match status" value="1"/>
</dbReference>
<dbReference type="FunFam" id="3.20.20.70:FF:000040">
    <property type="entry name" value="Lipoyl synthase"/>
    <property type="match status" value="1"/>
</dbReference>
<dbReference type="Gene3D" id="3.20.20.70">
    <property type="entry name" value="Aldolase class I"/>
    <property type="match status" value="1"/>
</dbReference>
<dbReference type="HAMAP" id="MF_00206">
    <property type="entry name" value="Lipoyl_synth"/>
    <property type="match status" value="1"/>
</dbReference>
<dbReference type="InterPro" id="IPR013785">
    <property type="entry name" value="Aldolase_TIM"/>
</dbReference>
<dbReference type="InterPro" id="IPR006638">
    <property type="entry name" value="Elp3/MiaA/NifB-like_rSAM"/>
</dbReference>
<dbReference type="InterPro" id="IPR031691">
    <property type="entry name" value="LIAS_N"/>
</dbReference>
<dbReference type="InterPro" id="IPR003698">
    <property type="entry name" value="Lipoyl_synth"/>
</dbReference>
<dbReference type="InterPro" id="IPR007197">
    <property type="entry name" value="rSAM"/>
</dbReference>
<dbReference type="NCBIfam" id="TIGR00510">
    <property type="entry name" value="lipA"/>
    <property type="match status" value="1"/>
</dbReference>
<dbReference type="NCBIfam" id="NF004019">
    <property type="entry name" value="PRK05481.1"/>
    <property type="match status" value="1"/>
</dbReference>
<dbReference type="NCBIfam" id="NF009544">
    <property type="entry name" value="PRK12928.1"/>
    <property type="match status" value="1"/>
</dbReference>
<dbReference type="PANTHER" id="PTHR10949">
    <property type="entry name" value="LIPOYL SYNTHASE"/>
    <property type="match status" value="1"/>
</dbReference>
<dbReference type="PANTHER" id="PTHR10949:SF0">
    <property type="entry name" value="LIPOYL SYNTHASE, MITOCHONDRIAL"/>
    <property type="match status" value="1"/>
</dbReference>
<dbReference type="Pfam" id="PF16881">
    <property type="entry name" value="LIAS_N"/>
    <property type="match status" value="1"/>
</dbReference>
<dbReference type="Pfam" id="PF04055">
    <property type="entry name" value="Radical_SAM"/>
    <property type="match status" value="1"/>
</dbReference>
<dbReference type="PIRSF" id="PIRSF005963">
    <property type="entry name" value="Lipoyl_synth"/>
    <property type="match status" value="1"/>
</dbReference>
<dbReference type="SFLD" id="SFLDF00271">
    <property type="entry name" value="lipoyl_synthase"/>
    <property type="match status" value="1"/>
</dbReference>
<dbReference type="SFLD" id="SFLDS00029">
    <property type="entry name" value="Radical_SAM"/>
    <property type="match status" value="1"/>
</dbReference>
<dbReference type="SMART" id="SM00729">
    <property type="entry name" value="Elp3"/>
    <property type="match status" value="1"/>
</dbReference>
<dbReference type="SUPFAM" id="SSF102114">
    <property type="entry name" value="Radical SAM enzymes"/>
    <property type="match status" value="1"/>
</dbReference>
<dbReference type="PROSITE" id="PS51918">
    <property type="entry name" value="RADICAL_SAM"/>
    <property type="match status" value="1"/>
</dbReference>
<sequence length="328" mass="36762">MTQQAKEPKFIKNGIYRKDAVPVRDKKPEWLKVTIPTGQVYGEVRKIVKEHRLHTVCEEAMCPNIGECWSRGTATFMLMGHICTRACRFCAVDTGNPMGKLDLEEPAHVAESVRLMGLKYVVLTSVDRDDLPDGGAYHFAKTVTAIKRENPGTRVEALTPDFGGNPHCVDLVLESGVDVYAQNLETVRRLTHPVRDIRASYERTLGVLKHAKQSRPDVITKTSIMLGLGETREELREAMLDCRAHGVDVITFGQYLRPTMHHLPVERYVSPAEFDEIREEGLSLGFLEVVAGPLVRSSYKAEQIVMDKPGNLPEHLAHLEGKEQLSLI</sequence>
<accession>Q1IXJ7</accession>
<reference key="1">
    <citation type="submission" date="2006-04" db="EMBL/GenBank/DDBJ databases">
        <title>Complete sequence of chromosome of Deinococcus geothermalis DSM 11300.</title>
        <authorList>
            <person name="Copeland A."/>
            <person name="Lucas S."/>
            <person name="Lapidus A."/>
            <person name="Barry K."/>
            <person name="Detter J.C."/>
            <person name="Glavina del Rio T."/>
            <person name="Hammon N."/>
            <person name="Israni S."/>
            <person name="Dalin E."/>
            <person name="Tice H."/>
            <person name="Pitluck S."/>
            <person name="Brettin T."/>
            <person name="Bruce D."/>
            <person name="Han C."/>
            <person name="Tapia R."/>
            <person name="Saunders E."/>
            <person name="Gilna P."/>
            <person name="Schmutz J."/>
            <person name="Larimer F."/>
            <person name="Land M."/>
            <person name="Hauser L."/>
            <person name="Kyrpides N."/>
            <person name="Kim E."/>
            <person name="Daly M.J."/>
            <person name="Fredrickson J.K."/>
            <person name="Makarova K.S."/>
            <person name="Gaidamakova E.K."/>
            <person name="Zhai M."/>
            <person name="Richardson P."/>
        </authorList>
    </citation>
    <scope>NUCLEOTIDE SEQUENCE [LARGE SCALE GENOMIC DNA]</scope>
    <source>
        <strain>DSM 11300 / CIP 105573 / AG-3a</strain>
    </source>
</reference>
<gene>
    <name evidence="1" type="primary">lipA</name>
    <name type="ordered locus">Dgeo_1742</name>
</gene>
<comment type="function">
    <text evidence="1">Catalyzes the radical-mediated insertion of two sulfur atoms into the C-6 and C-8 positions of the octanoyl moiety bound to the lipoyl domains of lipoate-dependent enzymes, thereby converting the octanoylated domains into lipoylated derivatives.</text>
</comment>
<comment type="catalytic activity">
    <reaction evidence="1">
        <text>[[Fe-S] cluster scaffold protein carrying a second [4Fe-4S](2+) cluster] + N(6)-octanoyl-L-lysyl-[protein] + 2 oxidized [2Fe-2S]-[ferredoxin] + 2 S-adenosyl-L-methionine + 4 H(+) = [[Fe-S] cluster scaffold protein] + N(6)-[(R)-dihydrolipoyl]-L-lysyl-[protein] + 4 Fe(3+) + 2 hydrogen sulfide + 2 5'-deoxyadenosine + 2 L-methionine + 2 reduced [2Fe-2S]-[ferredoxin]</text>
        <dbReference type="Rhea" id="RHEA:16585"/>
        <dbReference type="Rhea" id="RHEA-COMP:9928"/>
        <dbReference type="Rhea" id="RHEA-COMP:10000"/>
        <dbReference type="Rhea" id="RHEA-COMP:10001"/>
        <dbReference type="Rhea" id="RHEA-COMP:10475"/>
        <dbReference type="Rhea" id="RHEA-COMP:14568"/>
        <dbReference type="Rhea" id="RHEA-COMP:14569"/>
        <dbReference type="ChEBI" id="CHEBI:15378"/>
        <dbReference type="ChEBI" id="CHEBI:17319"/>
        <dbReference type="ChEBI" id="CHEBI:29034"/>
        <dbReference type="ChEBI" id="CHEBI:29919"/>
        <dbReference type="ChEBI" id="CHEBI:33722"/>
        <dbReference type="ChEBI" id="CHEBI:33737"/>
        <dbReference type="ChEBI" id="CHEBI:33738"/>
        <dbReference type="ChEBI" id="CHEBI:57844"/>
        <dbReference type="ChEBI" id="CHEBI:59789"/>
        <dbReference type="ChEBI" id="CHEBI:78809"/>
        <dbReference type="ChEBI" id="CHEBI:83100"/>
        <dbReference type="EC" id="2.8.1.8"/>
    </reaction>
</comment>
<comment type="cofactor">
    <cofactor evidence="1">
        <name>[4Fe-4S] cluster</name>
        <dbReference type="ChEBI" id="CHEBI:49883"/>
    </cofactor>
    <text evidence="1">Binds 2 [4Fe-4S] clusters per subunit. One cluster is coordinated with 3 cysteines and an exchangeable S-adenosyl-L-methionine.</text>
</comment>
<comment type="pathway">
    <text evidence="1">Protein modification; protein lipoylation via endogenous pathway; protein N(6)-(lipoyl)lysine from octanoyl-[acyl-carrier-protein]: step 2/2.</text>
</comment>
<comment type="subcellular location">
    <subcellularLocation>
        <location evidence="1">Cytoplasm</location>
    </subcellularLocation>
</comment>
<comment type="similarity">
    <text evidence="1">Belongs to the radical SAM superfamily. Lipoyl synthase family.</text>
</comment>
<proteinExistence type="inferred from homology"/>
<evidence type="ECO:0000255" key="1">
    <source>
        <dbReference type="HAMAP-Rule" id="MF_00206"/>
    </source>
</evidence>
<evidence type="ECO:0000255" key="2">
    <source>
        <dbReference type="PROSITE-ProRule" id="PRU01266"/>
    </source>
</evidence>
<protein>
    <recommendedName>
        <fullName evidence="1">Lipoyl synthase</fullName>
        <ecNumber evidence="1">2.8.1.8</ecNumber>
    </recommendedName>
    <alternativeName>
        <fullName evidence="1">Lip-syn</fullName>
        <shortName evidence="1">LS</shortName>
    </alternativeName>
    <alternativeName>
        <fullName evidence="1">Lipoate synthase</fullName>
    </alternativeName>
    <alternativeName>
        <fullName evidence="1">Lipoic acid synthase</fullName>
    </alternativeName>
    <alternativeName>
        <fullName evidence="1">Sulfur insertion protein LipA</fullName>
    </alternativeName>
</protein>
<organism>
    <name type="scientific">Deinococcus geothermalis (strain DSM 11300 / CIP 105573 / AG-3a)</name>
    <dbReference type="NCBI Taxonomy" id="319795"/>
    <lineage>
        <taxon>Bacteria</taxon>
        <taxon>Thermotogati</taxon>
        <taxon>Deinococcota</taxon>
        <taxon>Deinococci</taxon>
        <taxon>Deinococcales</taxon>
        <taxon>Deinococcaceae</taxon>
        <taxon>Deinococcus</taxon>
    </lineage>
</organism>